<dbReference type="EMBL" id="AF169157">
    <property type="protein sequence ID" value="AAF25791.1"/>
    <property type="molecule type" value="mRNA"/>
</dbReference>
<dbReference type="EMBL" id="AF169156">
    <property type="protein sequence ID" value="AAF25790.1"/>
    <property type="molecule type" value="mRNA"/>
</dbReference>
<dbReference type="EMBL" id="BC107029">
    <property type="protein sequence ID" value="AAI07030.1"/>
    <property type="molecule type" value="mRNA"/>
</dbReference>
<dbReference type="RefSeq" id="NP_001153724.1">
    <property type="nucleotide sequence ID" value="NM_001160252.1"/>
</dbReference>
<dbReference type="RefSeq" id="NP_001153725.1">
    <property type="nucleotide sequence ID" value="NM_001160253.1"/>
</dbReference>
<dbReference type="RefSeq" id="NP_038906.2">
    <property type="nucleotide sequence ID" value="NM_013878.2"/>
</dbReference>
<dbReference type="SMR" id="Q9JLK4"/>
<dbReference type="FunCoup" id="Q9JLK4">
    <property type="interactions" value="73"/>
</dbReference>
<dbReference type="STRING" id="10090.ENSMUSP00000125255"/>
<dbReference type="PaxDb" id="10090-ENSMUSP00000125255"/>
<dbReference type="ProteomicsDB" id="273873">
    <molecule id="Q9JLK4-1"/>
</dbReference>
<dbReference type="ProteomicsDB" id="273874">
    <molecule id="Q9JLK4-2"/>
</dbReference>
<dbReference type="DNASU" id="29866"/>
<dbReference type="GeneID" id="29866"/>
<dbReference type="KEGG" id="mmu:29866"/>
<dbReference type="AGR" id="MGI:1352749"/>
<dbReference type="CTD" id="51475"/>
<dbReference type="MGI" id="MGI:1352749">
    <property type="gene designation" value="Cabp2"/>
</dbReference>
<dbReference type="eggNOG" id="KOG0027">
    <property type="taxonomic scope" value="Eukaryota"/>
</dbReference>
<dbReference type="InParanoid" id="Q9JLK4"/>
<dbReference type="OrthoDB" id="26525at2759"/>
<dbReference type="PhylomeDB" id="Q9JLK4"/>
<dbReference type="BioGRID-ORCS" id="29866">
    <property type="hits" value="3 hits in 77 CRISPR screens"/>
</dbReference>
<dbReference type="PRO" id="PR:Q9JLK4"/>
<dbReference type="Proteomes" id="UP000000589">
    <property type="component" value="Unplaced"/>
</dbReference>
<dbReference type="RNAct" id="Q9JLK4">
    <property type="molecule type" value="protein"/>
</dbReference>
<dbReference type="GO" id="GO:0005794">
    <property type="term" value="C:Golgi apparatus"/>
    <property type="evidence" value="ECO:0000266"/>
    <property type="project" value="MGI"/>
</dbReference>
<dbReference type="GO" id="GO:0048471">
    <property type="term" value="C:perinuclear region of cytoplasm"/>
    <property type="evidence" value="ECO:0007669"/>
    <property type="project" value="UniProtKB-SubCell"/>
</dbReference>
<dbReference type="GO" id="GO:0005886">
    <property type="term" value="C:plasma membrane"/>
    <property type="evidence" value="ECO:0000266"/>
    <property type="project" value="MGI"/>
</dbReference>
<dbReference type="GO" id="GO:0005246">
    <property type="term" value="F:calcium channel regulator activity"/>
    <property type="evidence" value="ECO:0000315"/>
    <property type="project" value="UniProtKB"/>
</dbReference>
<dbReference type="GO" id="GO:0005509">
    <property type="term" value="F:calcium ion binding"/>
    <property type="evidence" value="ECO:0007669"/>
    <property type="project" value="InterPro"/>
</dbReference>
<dbReference type="GO" id="GO:0007605">
    <property type="term" value="P:sensory perception of sound"/>
    <property type="evidence" value="ECO:0000315"/>
    <property type="project" value="UniProtKB"/>
</dbReference>
<dbReference type="GO" id="GO:0007601">
    <property type="term" value="P:visual perception"/>
    <property type="evidence" value="ECO:0000315"/>
    <property type="project" value="UniProtKB"/>
</dbReference>
<dbReference type="CDD" id="cd00051">
    <property type="entry name" value="EFh"/>
    <property type="match status" value="1"/>
</dbReference>
<dbReference type="FunFam" id="1.10.238.10:FF:000069">
    <property type="entry name" value="calcium-binding protein 1 isoform X1"/>
    <property type="match status" value="1"/>
</dbReference>
<dbReference type="FunFam" id="1.10.238.10:FF:000037">
    <property type="entry name" value="calcium-binding protein 1 isoform X2"/>
    <property type="match status" value="1"/>
</dbReference>
<dbReference type="Gene3D" id="1.10.238.10">
    <property type="entry name" value="EF-hand"/>
    <property type="match status" value="2"/>
</dbReference>
<dbReference type="InterPro" id="IPR043582">
    <property type="entry name" value="CaBP1/2/4/5"/>
</dbReference>
<dbReference type="InterPro" id="IPR011992">
    <property type="entry name" value="EF-hand-dom_pair"/>
</dbReference>
<dbReference type="InterPro" id="IPR018247">
    <property type="entry name" value="EF_Hand_1_Ca_BS"/>
</dbReference>
<dbReference type="InterPro" id="IPR002048">
    <property type="entry name" value="EF_hand_dom"/>
</dbReference>
<dbReference type="PANTHER" id="PTHR45917">
    <property type="entry name" value="CALCIUM-BINDING PROTEIN 1-RELATED"/>
    <property type="match status" value="1"/>
</dbReference>
<dbReference type="PANTHER" id="PTHR45917:SF2">
    <property type="entry name" value="CALCIUM-BINDING PROTEIN 2"/>
    <property type="match status" value="1"/>
</dbReference>
<dbReference type="Pfam" id="PF13499">
    <property type="entry name" value="EF-hand_7"/>
    <property type="match status" value="2"/>
</dbReference>
<dbReference type="SMART" id="SM00054">
    <property type="entry name" value="EFh"/>
    <property type="match status" value="3"/>
</dbReference>
<dbReference type="SUPFAM" id="SSF47473">
    <property type="entry name" value="EF-hand"/>
    <property type="match status" value="1"/>
</dbReference>
<dbReference type="PROSITE" id="PS00018">
    <property type="entry name" value="EF_HAND_1"/>
    <property type="match status" value="3"/>
</dbReference>
<dbReference type="PROSITE" id="PS50222">
    <property type="entry name" value="EF_HAND_2"/>
    <property type="match status" value="4"/>
</dbReference>
<accession>Q9JLK4</accession>
<accession>Q3KNX9</accession>
<accession>Q9JLK5</accession>
<keyword id="KW-0025">Alternative splicing</keyword>
<keyword id="KW-0106">Calcium</keyword>
<keyword id="KW-1003">Cell membrane</keyword>
<keyword id="KW-0963">Cytoplasm</keyword>
<keyword id="KW-0333">Golgi apparatus</keyword>
<keyword id="KW-1009">Hearing</keyword>
<keyword id="KW-0449">Lipoprotein</keyword>
<keyword id="KW-0472">Membrane</keyword>
<keyword id="KW-0479">Metal-binding</keyword>
<keyword id="KW-0519">Myristate</keyword>
<keyword id="KW-1185">Reference proteome</keyword>
<keyword id="KW-0677">Repeat</keyword>
<keyword id="KW-0716">Sensory transduction</keyword>
<keyword id="KW-0844">Vision</keyword>
<sequence length="216" mass="24223">MGNCAKTPWHRGSKERWQWPGSPLGGSRPSPGPRTEEQEGTQGYSVLGSLVGPACIFLRPSIAATQLDRELRPEEIEELQIAFQEFDRDRDGYIGYRELGACMRTLGYMPTEMELIEISQQISGGKVDFEDFVELMGPKLLAETADMIGVRELRDAFREFDTNGDGCISVGELRAALKALLGERLSQREVDEILQDIDLNGDGLVDFEEFVRMMSR</sequence>
<name>CABP2_MOUSE</name>
<gene>
    <name type="primary">Cabp2</name>
</gene>
<protein>
    <recommendedName>
        <fullName>Calcium-binding protein 2</fullName>
        <shortName>CaBP2</shortName>
    </recommendedName>
</protein>
<comment type="function">
    <text evidence="6 7">Required for sound encoding at inner hair cells (IHCs) synapses, likely via inhibition of the inactivation of voltage-gated calcium channel of type 1.3 (Cav1.3) in the IHCs (PubMed:28183797). Required for the normal transfer of light signals through the retina (PubMed:27822497).</text>
</comment>
<comment type="subcellular location">
    <subcellularLocation>
        <location evidence="1">Cytoplasm</location>
        <location evidence="1">Perinuclear region</location>
    </subcellularLocation>
    <subcellularLocation>
        <location evidence="1">Cell membrane</location>
        <topology evidence="1">Lipid-anchor</topology>
        <orientation evidence="1">Cytoplasmic side</orientation>
    </subcellularLocation>
    <subcellularLocation>
        <location evidence="1">Golgi apparatus</location>
    </subcellularLocation>
</comment>
<comment type="alternative products">
    <event type="alternative splicing"/>
    <isoform>
        <id>Q9JLK4-1</id>
        <name>L-CaBP2</name>
        <sequence type="displayed"/>
    </isoform>
    <isoform>
        <id>Q9JLK4-2</id>
        <name>S-CaBP2</name>
        <sequence type="described" ref="VSP_000735"/>
    </isoform>
</comment>
<comment type="tissue specificity">
    <text evidence="4 5 6 7">Expressed in the inner hair cells (IHCs), outer hair cells,(OHCs) and vestibular hair cells within the ear and in the retina (at protein level) (PubMed:17947313, PubMed:28183797). Expressed in the retinal cone type 6 ON-bipolar cells and type 1 OFF-bipolar cells (at protein level) (PubMed:27822497). Expressed in the organ of Corti and spiral ganglion neurons in the cochlea (at protein level) (PubMed:26809054).</text>
</comment>
<comment type="disruption phenotype">
    <text evidence="6 7">Mice exhibit synaptic hearing impairment and impaired auditory brainstem responses. Enhanced inactivation of Ca(2+) influx in inner hair cells (IHCs), whereas its amplitude and voltage dependence of activation is normal. Reduced normal spontaneous and sound-evoked firing of spiral ganglion neurons (SGNs) seen (PubMed:28183797). Mice exhibit normal retinal morphology but altered light responses of retinal ganglion cells (PubMed:27822497).</text>
</comment>
<feature type="initiator methionine" description="Removed">
    <location>
        <position position="1"/>
    </location>
</feature>
<feature type="chain" id="PRO_0000073518" description="Calcium-binding protein 2">
    <location>
        <begin position="2"/>
        <end position="216"/>
    </location>
</feature>
<feature type="domain" description="EF-hand 1" evidence="2">
    <location>
        <begin position="74"/>
        <end position="109"/>
    </location>
</feature>
<feature type="domain" description="EF-hand 2" evidence="2">
    <location>
        <begin position="125"/>
        <end position="142"/>
    </location>
</feature>
<feature type="domain" description="EF-hand 3" evidence="2">
    <location>
        <begin position="148"/>
        <end position="183"/>
    </location>
</feature>
<feature type="domain" description="EF-hand 4" evidence="2">
    <location>
        <begin position="185"/>
        <end position="216"/>
    </location>
</feature>
<feature type="region of interest" description="Disordered" evidence="3">
    <location>
        <begin position="1"/>
        <end position="41"/>
    </location>
</feature>
<feature type="compositionally biased region" description="Low complexity" evidence="3">
    <location>
        <begin position="20"/>
        <end position="29"/>
    </location>
</feature>
<feature type="binding site" evidence="2">
    <location>
        <position position="87"/>
    </location>
    <ligand>
        <name>Ca(2+)</name>
        <dbReference type="ChEBI" id="CHEBI:29108"/>
        <label>1</label>
    </ligand>
</feature>
<feature type="binding site" evidence="2">
    <location>
        <position position="89"/>
    </location>
    <ligand>
        <name>Ca(2+)</name>
        <dbReference type="ChEBI" id="CHEBI:29108"/>
        <label>1</label>
    </ligand>
</feature>
<feature type="binding site" evidence="2">
    <location>
        <position position="91"/>
    </location>
    <ligand>
        <name>Ca(2+)</name>
        <dbReference type="ChEBI" id="CHEBI:29108"/>
        <label>1</label>
    </ligand>
</feature>
<feature type="binding site" evidence="2">
    <location>
        <position position="93"/>
    </location>
    <ligand>
        <name>Ca(2+)</name>
        <dbReference type="ChEBI" id="CHEBI:29108"/>
        <label>1</label>
    </ligand>
</feature>
<feature type="binding site" evidence="2">
    <location>
        <position position="98"/>
    </location>
    <ligand>
        <name>Ca(2+)</name>
        <dbReference type="ChEBI" id="CHEBI:29108"/>
        <label>1</label>
    </ligand>
</feature>
<feature type="binding site" evidence="2">
    <location>
        <position position="161"/>
    </location>
    <ligand>
        <name>Ca(2+)</name>
        <dbReference type="ChEBI" id="CHEBI:29108"/>
        <label>2</label>
    </ligand>
</feature>
<feature type="binding site" evidence="2">
    <location>
        <position position="163"/>
    </location>
    <ligand>
        <name>Ca(2+)</name>
        <dbReference type="ChEBI" id="CHEBI:29108"/>
        <label>2</label>
    </ligand>
</feature>
<feature type="binding site" evidence="2">
    <location>
        <position position="165"/>
    </location>
    <ligand>
        <name>Ca(2+)</name>
        <dbReference type="ChEBI" id="CHEBI:29108"/>
        <label>2</label>
    </ligand>
</feature>
<feature type="binding site" evidence="2">
    <location>
        <position position="167"/>
    </location>
    <ligand>
        <name>Ca(2+)</name>
        <dbReference type="ChEBI" id="CHEBI:29108"/>
        <label>2</label>
    </ligand>
</feature>
<feature type="binding site" evidence="2">
    <location>
        <position position="172"/>
    </location>
    <ligand>
        <name>Ca(2+)</name>
        <dbReference type="ChEBI" id="CHEBI:29108"/>
        <label>2</label>
    </ligand>
</feature>
<feature type="binding site" evidence="2">
    <location>
        <position position="198"/>
    </location>
    <ligand>
        <name>Ca(2+)</name>
        <dbReference type="ChEBI" id="CHEBI:29108"/>
        <label>3</label>
    </ligand>
</feature>
<feature type="binding site" evidence="2">
    <location>
        <position position="200"/>
    </location>
    <ligand>
        <name>Ca(2+)</name>
        <dbReference type="ChEBI" id="CHEBI:29108"/>
        <label>3</label>
    </ligand>
</feature>
<feature type="binding site" evidence="2">
    <location>
        <position position="202"/>
    </location>
    <ligand>
        <name>Ca(2+)</name>
        <dbReference type="ChEBI" id="CHEBI:29108"/>
        <label>3</label>
    </ligand>
</feature>
<feature type="binding site" evidence="2">
    <location>
        <position position="209"/>
    </location>
    <ligand>
        <name>Ca(2+)</name>
        <dbReference type="ChEBI" id="CHEBI:29108"/>
        <label>3</label>
    </ligand>
</feature>
<feature type="lipid moiety-binding region" description="N-myristoyl glycine" evidence="1">
    <location>
        <position position="2"/>
    </location>
</feature>
<feature type="splice variant" id="VSP_000735" description="In isoform S-CaBP2." evidence="8">
    <location>
        <begin position="16"/>
        <end position="68"/>
    </location>
</feature>
<evidence type="ECO:0000250" key="1"/>
<evidence type="ECO:0000255" key="2">
    <source>
        <dbReference type="PROSITE-ProRule" id="PRU00448"/>
    </source>
</evidence>
<evidence type="ECO:0000256" key="3">
    <source>
        <dbReference type="SAM" id="MobiDB-lite"/>
    </source>
</evidence>
<evidence type="ECO:0000269" key="4">
    <source>
    </source>
</evidence>
<evidence type="ECO:0000269" key="5">
    <source>
    </source>
</evidence>
<evidence type="ECO:0000269" key="6">
    <source>
    </source>
</evidence>
<evidence type="ECO:0000269" key="7">
    <source>
    </source>
</evidence>
<evidence type="ECO:0000303" key="8">
    <source>
    </source>
</evidence>
<organism>
    <name type="scientific">Mus musculus</name>
    <name type="common">Mouse</name>
    <dbReference type="NCBI Taxonomy" id="10090"/>
    <lineage>
        <taxon>Eukaryota</taxon>
        <taxon>Metazoa</taxon>
        <taxon>Chordata</taxon>
        <taxon>Craniata</taxon>
        <taxon>Vertebrata</taxon>
        <taxon>Euteleostomi</taxon>
        <taxon>Mammalia</taxon>
        <taxon>Eutheria</taxon>
        <taxon>Euarchontoglires</taxon>
        <taxon>Glires</taxon>
        <taxon>Rodentia</taxon>
        <taxon>Myomorpha</taxon>
        <taxon>Muroidea</taxon>
        <taxon>Muridae</taxon>
        <taxon>Murinae</taxon>
        <taxon>Mus</taxon>
        <taxon>Mus</taxon>
    </lineage>
</organism>
<reference key="1">
    <citation type="journal article" date="2000" name="J. Biol. Chem.">
        <title>Five members of a novel Ca(2+)-binding protein (CABP) subfamily with similarity to calmodulin.</title>
        <authorList>
            <person name="Haeseleer F."/>
            <person name="Sokal I."/>
            <person name="Verlinde C.L.M.J."/>
            <person name="Erdjument-Bromage H."/>
            <person name="Tempst P."/>
            <person name="Pronin A.N."/>
            <person name="Benovic J.L."/>
            <person name="Fariss R.N."/>
            <person name="Palczewski K."/>
        </authorList>
    </citation>
    <scope>NUCLEOTIDE SEQUENCE [MRNA] (ISOFORMS L-CABP2 AND S-CABP2)</scope>
    <source>
        <tissue>Retina</tissue>
    </source>
</reference>
<reference key="2">
    <citation type="journal article" date="2004" name="Genome Res.">
        <title>The status, quality, and expansion of the NIH full-length cDNA project: the Mammalian Gene Collection (MGC).</title>
        <authorList>
            <consortium name="The MGC Project Team"/>
        </authorList>
    </citation>
    <scope>NUCLEOTIDE SEQUENCE [LARGE SCALE MRNA] (ISOFORM L-CABP2)</scope>
</reference>
<reference key="3">
    <citation type="journal article" date="2007" name="J. Physiol. (Lond.)">
        <title>Ca2+-binding proteins tune Ca2+-feedback to Cav1.3 channels in mouse auditory hair cells.</title>
        <authorList>
            <person name="Cui G."/>
            <person name="Meyer A.C."/>
            <person name="Calin-Jageman I."/>
            <person name="Neef J."/>
            <person name="Haeseleer F."/>
            <person name="Moser T."/>
            <person name="Lee A."/>
        </authorList>
    </citation>
    <scope>TISSUE SPECIFICITY</scope>
</reference>
<reference key="4">
    <citation type="journal article" date="2016" name="ENeuro">
        <title>Lack of CaBp1/caldendrin or cabp2 leads to altered ganglion cell responses.</title>
        <authorList>
            <person name="Sinha R."/>
            <person name="Lee A."/>
            <person name="Rieke F."/>
            <person name="Haeseleer F."/>
        </authorList>
    </citation>
    <scope>FUNCTION</scope>
    <scope>DISRUPTION PHENOTYPE</scope>
    <scope>TISSUE SPECIFICITY</scope>
</reference>
<reference key="5">
    <citation type="journal article" date="2016" name="PLoS ONE">
        <title>Expression and localization of cabp ca2+ binding proteins in the mouse cochlea.</title>
        <authorList>
            <person name="Yang T."/>
            <person name="Scholl E.S."/>
            <person name="Pan N."/>
            <person name="Fritzsch B."/>
            <person name="Haeseleer F."/>
            <person name="Lee A."/>
        </authorList>
    </citation>
    <scope>TISSUE SPECIFICITY</scope>
</reference>
<reference key="6">
    <citation type="journal article" date="2017" name="Proc. Natl. Acad. Sci. U.S.A.">
        <title>Ca(2+)-binding protein 2 inhibits Ca(2+)-channel inactivation in mouse inner hair cells.</title>
        <authorList>
            <person name="Picher M.M."/>
            <person name="Gehrt A."/>
            <person name="Meese S."/>
            <person name="Ivanovic A."/>
            <person name="Predoehl F."/>
            <person name="Jung S."/>
            <person name="Schrauwen I."/>
            <person name="Dragonetti A.G."/>
            <person name="Colombo R."/>
            <person name="Van Camp G."/>
            <person name="Strenzke N."/>
            <person name="Moser T."/>
        </authorList>
    </citation>
    <scope>FUNCTION</scope>
    <scope>DISRUPTION PHENOTYPE</scope>
    <scope>TISSUE SPECIFICITY</scope>
</reference>
<proteinExistence type="evidence at protein level"/>